<protein>
    <recommendedName>
        <fullName evidence="5">Small ribosomal subunit protein bS18m</fullName>
    </recommendedName>
    <alternativeName>
        <fullName>37S ribosomal protein rsm18, mitochondrial</fullName>
    </alternativeName>
</protein>
<organism>
    <name type="scientific">Schizosaccharomyces pombe (strain 972 / ATCC 24843)</name>
    <name type="common">Fission yeast</name>
    <dbReference type="NCBI Taxonomy" id="284812"/>
    <lineage>
        <taxon>Eukaryota</taxon>
        <taxon>Fungi</taxon>
        <taxon>Dikarya</taxon>
        <taxon>Ascomycota</taxon>
        <taxon>Taphrinomycotina</taxon>
        <taxon>Schizosaccharomycetes</taxon>
        <taxon>Schizosaccharomycetales</taxon>
        <taxon>Schizosaccharomycetaceae</taxon>
        <taxon>Schizosaccharomyces</taxon>
    </lineage>
</organism>
<name>RSM18_SCHPO</name>
<keyword id="KW-0496">Mitochondrion</keyword>
<keyword id="KW-1185">Reference proteome</keyword>
<keyword id="KW-0687">Ribonucleoprotein</keyword>
<keyword id="KW-0689">Ribosomal protein</keyword>
<keyword id="KW-0809">Transit peptide</keyword>
<reference key="1">
    <citation type="journal article" date="2002" name="Nature">
        <title>The genome sequence of Schizosaccharomyces pombe.</title>
        <authorList>
            <person name="Wood V."/>
            <person name="Gwilliam R."/>
            <person name="Rajandream M.A."/>
            <person name="Lyne M.H."/>
            <person name="Lyne R."/>
            <person name="Stewart A."/>
            <person name="Sgouros J.G."/>
            <person name="Peat N."/>
            <person name="Hayles J."/>
            <person name="Baker S.G."/>
            <person name="Basham D."/>
            <person name="Bowman S."/>
            <person name="Brooks K."/>
            <person name="Brown D."/>
            <person name="Brown S."/>
            <person name="Chillingworth T."/>
            <person name="Churcher C.M."/>
            <person name="Collins M."/>
            <person name="Connor R."/>
            <person name="Cronin A."/>
            <person name="Davis P."/>
            <person name="Feltwell T."/>
            <person name="Fraser A."/>
            <person name="Gentles S."/>
            <person name="Goble A."/>
            <person name="Hamlin N."/>
            <person name="Harris D.E."/>
            <person name="Hidalgo J."/>
            <person name="Hodgson G."/>
            <person name="Holroyd S."/>
            <person name="Hornsby T."/>
            <person name="Howarth S."/>
            <person name="Huckle E.J."/>
            <person name="Hunt S."/>
            <person name="Jagels K."/>
            <person name="James K.D."/>
            <person name="Jones L."/>
            <person name="Jones M."/>
            <person name="Leather S."/>
            <person name="McDonald S."/>
            <person name="McLean J."/>
            <person name="Mooney P."/>
            <person name="Moule S."/>
            <person name="Mungall K.L."/>
            <person name="Murphy L.D."/>
            <person name="Niblett D."/>
            <person name="Odell C."/>
            <person name="Oliver K."/>
            <person name="O'Neil S."/>
            <person name="Pearson D."/>
            <person name="Quail M.A."/>
            <person name="Rabbinowitsch E."/>
            <person name="Rutherford K.M."/>
            <person name="Rutter S."/>
            <person name="Saunders D."/>
            <person name="Seeger K."/>
            <person name="Sharp S."/>
            <person name="Skelton J."/>
            <person name="Simmonds M.N."/>
            <person name="Squares R."/>
            <person name="Squares S."/>
            <person name="Stevens K."/>
            <person name="Taylor K."/>
            <person name="Taylor R.G."/>
            <person name="Tivey A."/>
            <person name="Walsh S.V."/>
            <person name="Warren T."/>
            <person name="Whitehead S."/>
            <person name="Woodward J.R."/>
            <person name="Volckaert G."/>
            <person name="Aert R."/>
            <person name="Robben J."/>
            <person name="Grymonprez B."/>
            <person name="Weltjens I."/>
            <person name="Vanstreels E."/>
            <person name="Rieger M."/>
            <person name="Schaefer M."/>
            <person name="Mueller-Auer S."/>
            <person name="Gabel C."/>
            <person name="Fuchs M."/>
            <person name="Duesterhoeft A."/>
            <person name="Fritzc C."/>
            <person name="Holzer E."/>
            <person name="Moestl D."/>
            <person name="Hilbert H."/>
            <person name="Borzym K."/>
            <person name="Langer I."/>
            <person name="Beck A."/>
            <person name="Lehrach H."/>
            <person name="Reinhardt R."/>
            <person name="Pohl T.M."/>
            <person name="Eger P."/>
            <person name="Zimmermann W."/>
            <person name="Wedler H."/>
            <person name="Wambutt R."/>
            <person name="Purnelle B."/>
            <person name="Goffeau A."/>
            <person name="Cadieu E."/>
            <person name="Dreano S."/>
            <person name="Gloux S."/>
            <person name="Lelaure V."/>
            <person name="Mottier S."/>
            <person name="Galibert F."/>
            <person name="Aves S.J."/>
            <person name="Xiang Z."/>
            <person name="Hunt C."/>
            <person name="Moore K."/>
            <person name="Hurst S.M."/>
            <person name="Lucas M."/>
            <person name="Rochet M."/>
            <person name="Gaillardin C."/>
            <person name="Tallada V.A."/>
            <person name="Garzon A."/>
            <person name="Thode G."/>
            <person name="Daga R.R."/>
            <person name="Cruzado L."/>
            <person name="Jimenez J."/>
            <person name="Sanchez M."/>
            <person name="del Rey F."/>
            <person name="Benito J."/>
            <person name="Dominguez A."/>
            <person name="Revuelta J.L."/>
            <person name="Moreno S."/>
            <person name="Armstrong J."/>
            <person name="Forsburg S.L."/>
            <person name="Cerutti L."/>
            <person name="Lowe T."/>
            <person name="McCombie W.R."/>
            <person name="Paulsen I."/>
            <person name="Potashkin J."/>
            <person name="Shpakovski G.V."/>
            <person name="Ussery D."/>
            <person name="Barrell B.G."/>
            <person name="Nurse P."/>
        </authorList>
    </citation>
    <scope>NUCLEOTIDE SEQUENCE [LARGE SCALE GENOMIC DNA]</scope>
    <source>
        <strain>972 / ATCC 24843</strain>
    </source>
</reference>
<reference key="2">
    <citation type="journal article" date="2006" name="Nat. Biotechnol.">
        <title>ORFeome cloning and global analysis of protein localization in the fission yeast Schizosaccharomyces pombe.</title>
        <authorList>
            <person name="Matsuyama A."/>
            <person name="Arai R."/>
            <person name="Yashiroda Y."/>
            <person name="Shirai A."/>
            <person name="Kamata A."/>
            <person name="Sekido S."/>
            <person name="Kobayashi Y."/>
            <person name="Hashimoto A."/>
            <person name="Hamamoto M."/>
            <person name="Hiraoka Y."/>
            <person name="Horinouchi S."/>
            <person name="Yoshida M."/>
        </authorList>
    </citation>
    <scope>SUBCELLULAR LOCATION [LARGE SCALE ANALYSIS]</scope>
</reference>
<dbReference type="EMBL" id="CU329672">
    <property type="protein sequence ID" value="CAB52151.1"/>
    <property type="molecule type" value="Genomic_DNA"/>
</dbReference>
<dbReference type="PIR" id="T41197">
    <property type="entry name" value="T41197"/>
</dbReference>
<dbReference type="RefSeq" id="NP_587934.1">
    <property type="nucleotide sequence ID" value="NM_001022925.2"/>
</dbReference>
<dbReference type="SMR" id="Q9USL7"/>
<dbReference type="BioGRID" id="275498">
    <property type="interactions" value="1"/>
</dbReference>
<dbReference type="ComplexPortal" id="CPX-10315">
    <property type="entry name" value="37S mitochondrial small ribosomal subunit"/>
</dbReference>
<dbReference type="FunCoup" id="Q9USL7">
    <property type="interactions" value="204"/>
</dbReference>
<dbReference type="STRING" id="284812.Q9USL7"/>
<dbReference type="PaxDb" id="4896-SPCC18B5.04.1"/>
<dbReference type="EnsemblFungi" id="SPCC18B5.04.1">
    <property type="protein sequence ID" value="SPCC18B5.04.1:pep"/>
    <property type="gene ID" value="SPCC18B5.04"/>
</dbReference>
<dbReference type="GeneID" id="2538921"/>
<dbReference type="KEGG" id="spo:2538921"/>
<dbReference type="PomBase" id="SPCC18B5.04">
    <property type="gene designation" value="rsm18"/>
</dbReference>
<dbReference type="VEuPathDB" id="FungiDB:SPCC18B5.04"/>
<dbReference type="eggNOG" id="KOG3162">
    <property type="taxonomic scope" value="Eukaryota"/>
</dbReference>
<dbReference type="HOGENOM" id="CLU_082177_2_0_1"/>
<dbReference type="InParanoid" id="Q9USL7"/>
<dbReference type="OMA" id="LSMAIEY"/>
<dbReference type="PhylomeDB" id="Q9USL7"/>
<dbReference type="PRO" id="PR:Q9USL7"/>
<dbReference type="Proteomes" id="UP000002485">
    <property type="component" value="Chromosome III"/>
</dbReference>
<dbReference type="GO" id="GO:0005763">
    <property type="term" value="C:mitochondrial small ribosomal subunit"/>
    <property type="evidence" value="ECO:0000318"/>
    <property type="project" value="GO_Central"/>
</dbReference>
<dbReference type="GO" id="GO:0005739">
    <property type="term" value="C:mitochondrion"/>
    <property type="evidence" value="ECO:0007005"/>
    <property type="project" value="PomBase"/>
</dbReference>
<dbReference type="GO" id="GO:0070181">
    <property type="term" value="F:small ribosomal subunit rRNA binding"/>
    <property type="evidence" value="ECO:0000318"/>
    <property type="project" value="GO_Central"/>
</dbReference>
<dbReference type="GO" id="GO:0003735">
    <property type="term" value="F:structural constituent of ribosome"/>
    <property type="evidence" value="ECO:0000318"/>
    <property type="project" value="GO_Central"/>
</dbReference>
<dbReference type="GO" id="GO:0032543">
    <property type="term" value="P:mitochondrial translation"/>
    <property type="evidence" value="ECO:0000250"/>
    <property type="project" value="PomBase"/>
</dbReference>
<dbReference type="GO" id="GO:0006412">
    <property type="term" value="P:translation"/>
    <property type="evidence" value="ECO:0000318"/>
    <property type="project" value="GO_Central"/>
</dbReference>
<dbReference type="FunFam" id="4.10.640.10:FF:000028">
    <property type="entry name" value="ADL117Wp"/>
    <property type="match status" value="1"/>
</dbReference>
<dbReference type="Gene3D" id="4.10.640.10">
    <property type="entry name" value="Ribosomal protein S18"/>
    <property type="match status" value="1"/>
</dbReference>
<dbReference type="InterPro" id="IPR001648">
    <property type="entry name" value="Ribosomal_bS18"/>
</dbReference>
<dbReference type="InterPro" id="IPR036870">
    <property type="entry name" value="Ribosomal_bS18_sf"/>
</dbReference>
<dbReference type="PANTHER" id="PTHR13479">
    <property type="entry name" value="30S RIBOSOMAL PROTEIN S18"/>
    <property type="match status" value="1"/>
</dbReference>
<dbReference type="PANTHER" id="PTHR13479:SF40">
    <property type="entry name" value="SMALL RIBOSOMAL SUBUNIT PROTEIN BS18M"/>
    <property type="match status" value="1"/>
</dbReference>
<dbReference type="Pfam" id="PF01084">
    <property type="entry name" value="Ribosomal_S18"/>
    <property type="match status" value="1"/>
</dbReference>
<dbReference type="PRINTS" id="PR00974">
    <property type="entry name" value="RIBOSOMALS18"/>
</dbReference>
<dbReference type="SUPFAM" id="SSF46911">
    <property type="entry name" value="Ribosomal protein S18"/>
    <property type="match status" value="1"/>
</dbReference>
<accession>Q9USL7</accession>
<comment type="function">
    <text evidence="1">Component of the mitochondrial ribosome (mitoribosome), a dedicated translation machinery responsible for the synthesis of mitochondrial genome-encoded proteins, including at least some of the essential transmembrane subunits of the mitochondrial respiratory chain. The mitoribosomes are attached to the mitochondrial inner membrane and translation products are cotranslationally integrated into the membrane.</text>
</comment>
<comment type="subunit">
    <text evidence="1">Component of the mitochondrial small ribosomal subunit (mt-SSU). Mature yeast 74S mitochondrial ribosomes consist of a small (37S) and a large (54S) subunit. The 37S small subunit contains a 15S ribosomal RNA (15S mt-rRNA) and at least 32 different proteins. The 54S large subunit contains a 21S rRNA (21S mt-rRNA) and at least 45 different proteins.</text>
</comment>
<comment type="subcellular location">
    <subcellularLocation>
        <location evidence="4">Mitochondrion</location>
    </subcellularLocation>
</comment>
<comment type="similarity">
    <text evidence="5">Belongs to the bacterial ribosomal protein bS18 family.</text>
</comment>
<proteinExistence type="inferred from homology"/>
<gene>
    <name type="primary">rsm18</name>
    <name type="ORF">SPCC18B5.04</name>
</gene>
<feature type="transit peptide" description="Mitochondrion" evidence="2">
    <location>
        <begin position="1"/>
        <end position="31"/>
    </location>
</feature>
<feature type="chain" id="PRO_0000317315" description="Small ribosomal subunit protein bS18m">
    <location>
        <begin position="32"/>
        <end position="166"/>
    </location>
</feature>
<feature type="region of interest" description="Disordered" evidence="3">
    <location>
        <begin position="29"/>
        <end position="48"/>
    </location>
</feature>
<feature type="compositionally biased region" description="Basic and acidic residues" evidence="3">
    <location>
        <begin position="30"/>
        <end position="42"/>
    </location>
</feature>
<sequence length="166" mass="19031">MLGRRIFSPAPNRGFILCNLIQSNNSTRRGFSDNRKFNERNSEASSNVGFQRRVRSNIPSYLSASVEEGDIYSPNDLLFETVKAKNQAKFYEPVREDCFKTVNENPMNYWKNPVILSRFVTELGRIKPRGDTGLTAKNQRLLSRAIRRARAAGIMPTKYKSVYSEN</sequence>
<evidence type="ECO:0000250" key="1">
    <source>
        <dbReference type="UniProtKB" id="P40033"/>
    </source>
</evidence>
<evidence type="ECO:0000255" key="2"/>
<evidence type="ECO:0000256" key="3">
    <source>
        <dbReference type="SAM" id="MobiDB-lite"/>
    </source>
</evidence>
<evidence type="ECO:0000269" key="4">
    <source>
    </source>
</evidence>
<evidence type="ECO:0000305" key="5"/>